<keyword id="KW-0408">Iron</keyword>
<keyword id="KW-1185">Reference proteome</keyword>
<name>FETP_VEREI</name>
<sequence length="90" mass="9987">MARTVQCIKLGKEAEGLDFPPYPGELGQRIWANVSKQAWAGWLKHQTMLVNENRLNLADARARQYLARQMENHFFGSGADAAAGYVPPSA</sequence>
<proteinExistence type="inferred from homology"/>
<reference key="1">
    <citation type="submission" date="2006-12" db="EMBL/GenBank/DDBJ databases">
        <title>Complete sequence of chromosome 1 of Verminephrobacter eiseniae EF01-2.</title>
        <authorList>
            <person name="Copeland A."/>
            <person name="Lucas S."/>
            <person name="Lapidus A."/>
            <person name="Barry K."/>
            <person name="Detter J.C."/>
            <person name="Glavina del Rio T."/>
            <person name="Dalin E."/>
            <person name="Tice H."/>
            <person name="Pitluck S."/>
            <person name="Chertkov O."/>
            <person name="Brettin T."/>
            <person name="Bruce D."/>
            <person name="Han C."/>
            <person name="Tapia R."/>
            <person name="Gilna P."/>
            <person name="Schmutz J."/>
            <person name="Larimer F."/>
            <person name="Land M."/>
            <person name="Hauser L."/>
            <person name="Kyrpides N."/>
            <person name="Kim E."/>
            <person name="Stahl D."/>
            <person name="Richardson P."/>
        </authorList>
    </citation>
    <scope>NUCLEOTIDE SEQUENCE [LARGE SCALE GENOMIC DNA]</scope>
    <source>
        <strain>EF01-2</strain>
    </source>
</reference>
<protein>
    <recommendedName>
        <fullName evidence="1">Probable Fe(2+)-trafficking protein</fullName>
    </recommendedName>
</protein>
<accession>A1WH85</accession>
<evidence type="ECO:0000255" key="1">
    <source>
        <dbReference type="HAMAP-Rule" id="MF_00686"/>
    </source>
</evidence>
<gene>
    <name type="ordered locus">Veis_1222</name>
</gene>
<organism>
    <name type="scientific">Verminephrobacter eiseniae (strain EF01-2)</name>
    <dbReference type="NCBI Taxonomy" id="391735"/>
    <lineage>
        <taxon>Bacteria</taxon>
        <taxon>Pseudomonadati</taxon>
        <taxon>Pseudomonadota</taxon>
        <taxon>Betaproteobacteria</taxon>
        <taxon>Burkholderiales</taxon>
        <taxon>Comamonadaceae</taxon>
        <taxon>Verminephrobacter</taxon>
    </lineage>
</organism>
<feature type="chain" id="PRO_1000045072" description="Probable Fe(2+)-trafficking protein">
    <location>
        <begin position="1"/>
        <end position="90"/>
    </location>
</feature>
<dbReference type="EMBL" id="CP000542">
    <property type="protein sequence ID" value="ABM56992.1"/>
    <property type="molecule type" value="Genomic_DNA"/>
</dbReference>
<dbReference type="RefSeq" id="WP_011809003.1">
    <property type="nucleotide sequence ID" value="NC_008786.1"/>
</dbReference>
<dbReference type="SMR" id="A1WH85"/>
<dbReference type="STRING" id="391735.Veis_1222"/>
<dbReference type="GeneID" id="76459873"/>
<dbReference type="KEGG" id="vei:Veis_1222"/>
<dbReference type="eggNOG" id="COG2924">
    <property type="taxonomic scope" value="Bacteria"/>
</dbReference>
<dbReference type="HOGENOM" id="CLU_170994_0_0_4"/>
<dbReference type="OrthoDB" id="9804318at2"/>
<dbReference type="Proteomes" id="UP000000374">
    <property type="component" value="Chromosome"/>
</dbReference>
<dbReference type="GO" id="GO:0005829">
    <property type="term" value="C:cytosol"/>
    <property type="evidence" value="ECO:0007669"/>
    <property type="project" value="TreeGrafter"/>
</dbReference>
<dbReference type="GO" id="GO:0005506">
    <property type="term" value="F:iron ion binding"/>
    <property type="evidence" value="ECO:0007669"/>
    <property type="project" value="UniProtKB-UniRule"/>
</dbReference>
<dbReference type="GO" id="GO:0034599">
    <property type="term" value="P:cellular response to oxidative stress"/>
    <property type="evidence" value="ECO:0007669"/>
    <property type="project" value="TreeGrafter"/>
</dbReference>
<dbReference type="FunFam" id="1.10.3880.10:FF:000001">
    <property type="entry name" value="Probable Fe(2+)-trafficking protein"/>
    <property type="match status" value="1"/>
</dbReference>
<dbReference type="Gene3D" id="1.10.3880.10">
    <property type="entry name" value="Fe(II) trafficking protein YggX"/>
    <property type="match status" value="1"/>
</dbReference>
<dbReference type="HAMAP" id="MF_00686">
    <property type="entry name" value="Fe_traffic_YggX"/>
    <property type="match status" value="1"/>
</dbReference>
<dbReference type="InterPro" id="IPR007457">
    <property type="entry name" value="Fe_traffick_prot_YggX"/>
</dbReference>
<dbReference type="InterPro" id="IPR036766">
    <property type="entry name" value="Fe_traffick_prot_YggX_sf"/>
</dbReference>
<dbReference type="NCBIfam" id="NF003817">
    <property type="entry name" value="PRK05408.1"/>
    <property type="match status" value="1"/>
</dbReference>
<dbReference type="PANTHER" id="PTHR36965">
    <property type="entry name" value="FE(2+)-TRAFFICKING PROTEIN-RELATED"/>
    <property type="match status" value="1"/>
</dbReference>
<dbReference type="PANTHER" id="PTHR36965:SF1">
    <property type="entry name" value="FE(2+)-TRAFFICKING PROTEIN-RELATED"/>
    <property type="match status" value="1"/>
</dbReference>
<dbReference type="Pfam" id="PF04362">
    <property type="entry name" value="Iron_traffic"/>
    <property type="match status" value="1"/>
</dbReference>
<dbReference type="PIRSF" id="PIRSF029827">
    <property type="entry name" value="Fe_traffic_YggX"/>
    <property type="match status" value="1"/>
</dbReference>
<dbReference type="SUPFAM" id="SSF111148">
    <property type="entry name" value="YggX-like"/>
    <property type="match status" value="1"/>
</dbReference>
<comment type="function">
    <text evidence="1">Could be a mediator in iron transactions between iron acquisition and iron-requiring processes, such as synthesis and/or repair of Fe-S clusters in biosynthetic enzymes.</text>
</comment>
<comment type="similarity">
    <text evidence="1">Belongs to the Fe(2+)-trafficking protein family.</text>
</comment>